<dbReference type="EC" id="2.3.1.199" evidence="6"/>
<dbReference type="EMBL" id="AC005957">
    <property type="protein sequence ID" value="AAD03366.1"/>
    <property type="status" value="ALT_INIT"/>
    <property type="molecule type" value="Genomic_DNA"/>
</dbReference>
<dbReference type="EMBL" id="CP002685">
    <property type="protein sequence ID" value="AEC06369.1"/>
    <property type="molecule type" value="Genomic_DNA"/>
</dbReference>
<dbReference type="EMBL" id="BT023427">
    <property type="protein sequence ID" value="AAY56418.1"/>
    <property type="molecule type" value="mRNA"/>
</dbReference>
<dbReference type="EMBL" id="AK229027">
    <property type="protein sequence ID" value="BAF00913.1"/>
    <property type="molecule type" value="mRNA"/>
</dbReference>
<dbReference type="PIR" id="H84524">
    <property type="entry name" value="H84524"/>
</dbReference>
<dbReference type="RefSeq" id="NP_179113.2">
    <property type="nucleotide sequence ID" value="NM_127071.3"/>
</dbReference>
<dbReference type="SMR" id="Q4V3C9"/>
<dbReference type="FunCoup" id="Q4V3C9">
    <property type="interactions" value="203"/>
</dbReference>
<dbReference type="STRING" id="3702.Q4V3C9"/>
<dbReference type="GlyGen" id="Q4V3C9">
    <property type="glycosylation" value="1 site"/>
</dbReference>
<dbReference type="PaxDb" id="3702-AT2G15090.1"/>
<dbReference type="ProteomicsDB" id="247150"/>
<dbReference type="EnsemblPlants" id="AT2G15090.1">
    <property type="protein sequence ID" value="AT2G15090.1"/>
    <property type="gene ID" value="AT2G15090"/>
</dbReference>
<dbReference type="GeneID" id="815998"/>
<dbReference type="Gramene" id="AT2G15090.1">
    <property type="protein sequence ID" value="AT2G15090.1"/>
    <property type="gene ID" value="AT2G15090"/>
</dbReference>
<dbReference type="KEGG" id="ath:AT2G15090"/>
<dbReference type="Araport" id="AT2G15090"/>
<dbReference type="TAIR" id="AT2G15090">
    <property type="gene designation" value="KCS8"/>
</dbReference>
<dbReference type="eggNOG" id="ENOG502QPKZ">
    <property type="taxonomic scope" value="Eukaryota"/>
</dbReference>
<dbReference type="HOGENOM" id="CLU_013238_2_1_1"/>
<dbReference type="InParanoid" id="Q4V3C9"/>
<dbReference type="OMA" id="FECATQE"/>
<dbReference type="OrthoDB" id="1038969at2759"/>
<dbReference type="PhylomeDB" id="Q4V3C9"/>
<dbReference type="BioCyc" id="ARA:AT2G15090-MONOMER"/>
<dbReference type="UniPathway" id="UPA00094"/>
<dbReference type="PRO" id="PR:Q4V3C9"/>
<dbReference type="Proteomes" id="UP000006548">
    <property type="component" value="Chromosome 2"/>
</dbReference>
<dbReference type="ExpressionAtlas" id="Q4V3C9">
    <property type="expression patterns" value="baseline and differential"/>
</dbReference>
<dbReference type="GO" id="GO:0005783">
    <property type="term" value="C:endoplasmic reticulum"/>
    <property type="evidence" value="ECO:0000314"/>
    <property type="project" value="TAIR"/>
</dbReference>
<dbReference type="GO" id="GO:0005789">
    <property type="term" value="C:endoplasmic reticulum membrane"/>
    <property type="evidence" value="ECO:0007669"/>
    <property type="project" value="UniProtKB-SubCell"/>
</dbReference>
<dbReference type="GO" id="GO:0009922">
    <property type="term" value="F:fatty acid elongase activity"/>
    <property type="evidence" value="ECO:0007669"/>
    <property type="project" value="UniProtKB-EC"/>
</dbReference>
<dbReference type="GO" id="GO:0006633">
    <property type="term" value="P:fatty acid biosynthetic process"/>
    <property type="evidence" value="ECO:0007669"/>
    <property type="project" value="UniProtKB-UniPathway"/>
</dbReference>
<dbReference type="CDD" id="cd00831">
    <property type="entry name" value="CHS_like"/>
    <property type="match status" value="1"/>
</dbReference>
<dbReference type="FunFam" id="3.40.47.10:FF:000028">
    <property type="entry name" value="3-ketoacyl-CoA synthase"/>
    <property type="match status" value="1"/>
</dbReference>
<dbReference type="Gene3D" id="3.40.47.10">
    <property type="match status" value="1"/>
</dbReference>
<dbReference type="InterPro" id="IPR012392">
    <property type="entry name" value="3-ktacl-CoA_syn"/>
</dbReference>
<dbReference type="InterPro" id="IPR013747">
    <property type="entry name" value="ACP_syn_III_C"/>
</dbReference>
<dbReference type="InterPro" id="IPR013601">
    <property type="entry name" value="FAE1_typ3_polyketide_synth"/>
</dbReference>
<dbReference type="InterPro" id="IPR016039">
    <property type="entry name" value="Thiolase-like"/>
</dbReference>
<dbReference type="PANTHER" id="PTHR31561">
    <property type="entry name" value="3-KETOACYL-COA SYNTHASE"/>
    <property type="match status" value="1"/>
</dbReference>
<dbReference type="Pfam" id="PF08541">
    <property type="entry name" value="ACP_syn_III_C"/>
    <property type="match status" value="1"/>
</dbReference>
<dbReference type="Pfam" id="PF08392">
    <property type="entry name" value="FAE1_CUT1_RppA"/>
    <property type="match status" value="1"/>
</dbReference>
<dbReference type="PIRSF" id="PIRSF036417">
    <property type="entry name" value="3-ktacl-CoA_syn"/>
    <property type="match status" value="1"/>
</dbReference>
<dbReference type="SUPFAM" id="SSF53901">
    <property type="entry name" value="Thiolase-like"/>
    <property type="match status" value="2"/>
</dbReference>
<feature type="chain" id="PRO_0000249100" description="3-ketoacyl-CoA synthase 8">
    <location>
        <begin position="1"/>
        <end position="481"/>
    </location>
</feature>
<feature type="transmembrane region" description="Helical" evidence="2">
    <location>
        <begin position="4"/>
        <end position="24"/>
    </location>
</feature>
<feature type="transmembrane region" description="Helical" evidence="2">
    <location>
        <begin position="44"/>
        <end position="64"/>
    </location>
</feature>
<feature type="domain" description="FAE" evidence="2">
    <location>
        <begin position="61"/>
        <end position="358"/>
    </location>
</feature>
<feature type="active site" evidence="1">
    <location>
        <position position="213"/>
    </location>
</feature>
<feature type="active site" evidence="1">
    <location>
        <position position="292"/>
    </location>
</feature>
<feature type="active site" evidence="1">
    <location>
        <position position="376"/>
    </location>
</feature>
<feature type="active site" evidence="1">
    <location>
        <position position="380"/>
    </location>
</feature>
<feature type="active site" evidence="1">
    <location>
        <position position="409"/>
    </location>
</feature>
<feature type="active site" evidence="1">
    <location>
        <position position="413"/>
    </location>
</feature>
<keyword id="KW-0012">Acyltransferase</keyword>
<keyword id="KW-0256">Endoplasmic reticulum</keyword>
<keyword id="KW-0472">Membrane</keyword>
<keyword id="KW-1185">Reference proteome</keyword>
<keyword id="KW-0808">Transferase</keyword>
<keyword id="KW-0812">Transmembrane</keyword>
<keyword id="KW-1133">Transmembrane helix</keyword>
<name>KCS8_ARATH</name>
<organism>
    <name type="scientific">Arabidopsis thaliana</name>
    <name type="common">Mouse-ear cress</name>
    <dbReference type="NCBI Taxonomy" id="3702"/>
    <lineage>
        <taxon>Eukaryota</taxon>
        <taxon>Viridiplantae</taxon>
        <taxon>Streptophyta</taxon>
        <taxon>Embryophyta</taxon>
        <taxon>Tracheophyta</taxon>
        <taxon>Spermatophyta</taxon>
        <taxon>Magnoliopsida</taxon>
        <taxon>eudicotyledons</taxon>
        <taxon>Gunneridae</taxon>
        <taxon>Pentapetalae</taxon>
        <taxon>rosids</taxon>
        <taxon>malvids</taxon>
        <taxon>Brassicales</taxon>
        <taxon>Brassicaceae</taxon>
        <taxon>Camelineae</taxon>
        <taxon>Arabidopsis</taxon>
    </lineage>
</organism>
<gene>
    <name evidence="5" type="primary">KCS8</name>
    <name evidence="7" type="ordered locus">At2g15090</name>
    <name evidence="8" type="ORF">T15J14.13</name>
</gene>
<protein>
    <recommendedName>
        <fullName evidence="5">3-ketoacyl-CoA synthase 8</fullName>
        <shortName evidence="5">KCS-8</shortName>
        <ecNumber evidence="6">2.3.1.199</ecNumber>
    </recommendedName>
    <alternativeName>
        <fullName evidence="5">Very long-chain fatty acid condensing enzyme 8</fullName>
        <shortName evidence="5">VLCFA condensing enzyme 8</shortName>
    </alternativeName>
</protein>
<reference key="1">
    <citation type="journal article" date="1999" name="Nature">
        <title>Sequence and analysis of chromosome 2 of the plant Arabidopsis thaliana.</title>
        <authorList>
            <person name="Lin X."/>
            <person name="Kaul S."/>
            <person name="Rounsley S.D."/>
            <person name="Shea T.P."/>
            <person name="Benito M.-I."/>
            <person name="Town C.D."/>
            <person name="Fujii C.Y."/>
            <person name="Mason T.M."/>
            <person name="Bowman C.L."/>
            <person name="Barnstead M.E."/>
            <person name="Feldblyum T.V."/>
            <person name="Buell C.R."/>
            <person name="Ketchum K.A."/>
            <person name="Lee J.J."/>
            <person name="Ronning C.M."/>
            <person name="Koo H.L."/>
            <person name="Moffat K.S."/>
            <person name="Cronin L.A."/>
            <person name="Shen M."/>
            <person name="Pai G."/>
            <person name="Van Aken S."/>
            <person name="Umayam L."/>
            <person name="Tallon L.J."/>
            <person name="Gill J.E."/>
            <person name="Adams M.D."/>
            <person name="Carrera A.J."/>
            <person name="Creasy T.H."/>
            <person name="Goodman H.M."/>
            <person name="Somerville C.R."/>
            <person name="Copenhaver G.P."/>
            <person name="Preuss D."/>
            <person name="Nierman W.C."/>
            <person name="White O."/>
            <person name="Eisen J.A."/>
            <person name="Salzberg S.L."/>
            <person name="Fraser C.M."/>
            <person name="Venter J.C."/>
        </authorList>
    </citation>
    <scope>NUCLEOTIDE SEQUENCE [LARGE SCALE GENOMIC DNA]</scope>
    <source>
        <strain>cv. Columbia</strain>
    </source>
</reference>
<reference key="2">
    <citation type="journal article" date="2017" name="Plant J.">
        <title>Araport11: a complete reannotation of the Arabidopsis thaliana reference genome.</title>
        <authorList>
            <person name="Cheng C.Y."/>
            <person name="Krishnakumar V."/>
            <person name="Chan A.P."/>
            <person name="Thibaud-Nissen F."/>
            <person name="Schobel S."/>
            <person name="Town C.D."/>
        </authorList>
    </citation>
    <scope>GENOME REANNOTATION</scope>
    <source>
        <strain>cv. Columbia</strain>
    </source>
</reference>
<reference key="3">
    <citation type="submission" date="2005-05" db="EMBL/GenBank/DDBJ databases">
        <title>Arabidopsis ORF clones.</title>
        <authorList>
            <person name="Kim C.J."/>
            <person name="Chen H."/>
            <person name="Cheuk R.F."/>
            <person name="Shinn P."/>
            <person name="Ecker J.R."/>
        </authorList>
    </citation>
    <scope>NUCLEOTIDE SEQUENCE [LARGE SCALE MRNA]</scope>
    <source>
        <strain>cv. Columbia</strain>
    </source>
</reference>
<reference key="4">
    <citation type="submission" date="2006-07" db="EMBL/GenBank/DDBJ databases">
        <title>Large-scale analysis of RIKEN Arabidopsis full-length (RAFL) cDNAs.</title>
        <authorList>
            <person name="Totoki Y."/>
            <person name="Seki M."/>
            <person name="Ishida J."/>
            <person name="Nakajima M."/>
            <person name="Enju A."/>
            <person name="Kamiya A."/>
            <person name="Narusaka M."/>
            <person name="Shin-i T."/>
            <person name="Nakagawa M."/>
            <person name="Sakamoto N."/>
            <person name="Oishi K."/>
            <person name="Kohara Y."/>
            <person name="Kobayashi M."/>
            <person name="Toyoda A."/>
            <person name="Sakaki Y."/>
            <person name="Sakurai T."/>
            <person name="Iida K."/>
            <person name="Akiyama K."/>
            <person name="Satou M."/>
            <person name="Toyoda T."/>
            <person name="Konagaya A."/>
            <person name="Carninci P."/>
            <person name="Kawai J."/>
            <person name="Hayashizaki Y."/>
            <person name="Shinozaki K."/>
        </authorList>
    </citation>
    <scope>NUCLEOTIDE SEQUENCE [LARGE SCALE MRNA]</scope>
    <source>
        <strain>cv. Columbia</strain>
    </source>
</reference>
<reference key="5">
    <citation type="journal article" date="2003" name="Pest Manag. Sci.">
        <title>Flufenacet herbicide treatment phenocopies the fiddlehead mutant in Arabidopsis thaliana.</title>
        <authorList>
            <person name="Lechelt-Kunze C."/>
            <person name="Meissner R.C."/>
            <person name="Drewes M."/>
            <person name="Tietjen K."/>
        </authorList>
    </citation>
    <scope>INDUCTION</scope>
    <scope>GENE FAMILY</scope>
</reference>
<reference key="6">
    <citation type="journal article" date="2008" name="Plant Mol. Biol.">
        <title>The VLCFA elongase gene family in Arabidopsis thaliana: phylogenetic analysis, 3D modelling and expression profiling.</title>
        <authorList>
            <person name="Joubes J."/>
            <person name="Raffaele S."/>
            <person name="Bourdenx B."/>
            <person name="Garcia C."/>
            <person name="Laroche-Traineau J."/>
            <person name="Moreau P."/>
            <person name="Domergue F."/>
            <person name="Lessire R."/>
        </authorList>
    </citation>
    <scope>GENE FAMILY</scope>
    <scope>NOMENCLATURE</scope>
    <scope>3D-STRUCTURE MODELING</scope>
    <scope>SUBCELLULAR LOCATION</scope>
    <scope>TISSUE SPECIFICITY</scope>
    <scope>INDUCTION</scope>
</reference>
<accession>Q4V3C9</accession>
<accession>Q9ZUK2</accession>
<proteinExistence type="evidence at transcript level"/>
<sequence length="481" mass="54191">MKNLKMVFFKILFISLMAGLAMKGSKINVEDLQKFSLHHTQNNLQTISLLLFLVVFVWILYMLTRPKPVYLVDFSCYLPPSHLKVSIQTLMGHARRAREAGMCWKNKESDHLVDFQEKILERSGLGQETYIPEGLQCFPLQQGMGASRKETEEVIFGALDNLFRNTGVKPDDIGILVVNSSTFNPTPSLASMIVNKYKLRDNIKSLNLGGMGCSAGVIAVDVAKGLLQVHRNTYAIVVSTENITQNLYLGKNKSMLVTNCLFRVGGAAVLLSNRSRDRNRAKYELVHTVRIHTGSDDRSFECATQEEDEDGIIGVTLTKNLPMVAARTLKINIATLGPLVLPLKEKLAFFITFVKKKYFKPELRNYTPDFKLAFEHFCIHAGGRALIDELEKNLKLSPLHVEASRMTLHRFGNTSSSSIWYELAYTEAKGRMKEGDRIWQIALGSGFKCNSSVWVALRDVKPSANSPWEDCMDRYPVEIDI</sequence>
<comment type="catalytic activity">
    <reaction evidence="6">
        <text>a very-long-chain acyl-CoA + malonyl-CoA + H(+) = a very-long-chain 3-oxoacyl-CoA + CO2 + CoA</text>
        <dbReference type="Rhea" id="RHEA:32727"/>
        <dbReference type="ChEBI" id="CHEBI:15378"/>
        <dbReference type="ChEBI" id="CHEBI:16526"/>
        <dbReference type="ChEBI" id="CHEBI:57287"/>
        <dbReference type="ChEBI" id="CHEBI:57384"/>
        <dbReference type="ChEBI" id="CHEBI:90725"/>
        <dbReference type="ChEBI" id="CHEBI:90736"/>
        <dbReference type="EC" id="2.3.1.199"/>
    </reaction>
</comment>
<comment type="pathway">
    <text>Lipid metabolism; fatty acid biosynthesis.</text>
</comment>
<comment type="subcellular location">
    <subcellularLocation>
        <location evidence="4">Endoplasmic reticulum membrane</location>
        <topology evidence="2">Multi-pass membrane protein</topology>
    </subcellularLocation>
</comment>
<comment type="tissue specificity">
    <text evidence="4">Expressed in leaves and seedlings.</text>
</comment>
<comment type="induction">
    <text evidence="3 4">Repressed by herbicides such as flufenacet and benfuresate (PubMed:12916765). Down-regulated by darkness, low temperature, drought and osmotic stress (PubMed:18465198).</text>
</comment>
<comment type="similarity">
    <text evidence="6">Belongs to the thiolase-like superfamily. Chalcone/stilbene synthases family.</text>
</comment>
<comment type="sequence caution" evidence="6">
    <conflict type="erroneous initiation">
        <sequence resource="EMBL-CDS" id="AAD03366"/>
    </conflict>
    <text>Truncated N-terminus.</text>
</comment>
<evidence type="ECO:0000250" key="1">
    <source>
        <dbReference type="UniProtKB" id="Q38860"/>
    </source>
</evidence>
<evidence type="ECO:0000255" key="2"/>
<evidence type="ECO:0000269" key="3">
    <source>
    </source>
</evidence>
<evidence type="ECO:0000269" key="4">
    <source>
    </source>
</evidence>
<evidence type="ECO:0000303" key="5">
    <source>
    </source>
</evidence>
<evidence type="ECO:0000305" key="6"/>
<evidence type="ECO:0000312" key="7">
    <source>
        <dbReference type="Araport" id="AT2G15090"/>
    </source>
</evidence>
<evidence type="ECO:0000312" key="8">
    <source>
        <dbReference type="EMBL" id="AAD03366.1"/>
    </source>
</evidence>